<comment type="subcellular location">
    <subcellularLocation>
        <location evidence="2">Cell membrane</location>
        <topology evidence="2">Multi-pass membrane protein</topology>
    </subcellularLocation>
</comment>
<comment type="similarity">
    <text evidence="2">Belongs to the autoinducer-2 exporter (AI-2E) (TC 2.A.86) family.</text>
</comment>
<name>PERM_ECO57</name>
<sequence>MLEMLMQWYRRRFSDPEAIALLVILVAGFGIIFFFSGLLAPLLVAIVLAYLLEWPTVRLQSIGCSRRWATSIVLVVFVGILLLMAFVVLPIAWQQGIYLIRDMPGMLNKLSDFAATLPRRYPALMDAGIIDAMAENMRSRMLTMGDSVVKISLASLVGLLTIAVYLVLVPLMVFFLLKDKEQMLNAVRRVLPRNRGLAGQVWKEMNQQITNYIRGKVLEMIVVGIATWLGFLLFGLNYSLLLAVLVGFSVLIPYIGAFVVTIPVVGVALFQFGAGTEFWSCFAVYLIIQALDGNLLVPVLFSEAVNLHPLVIILSVVIFGGLWGFWGVFFAIPLATLIKAVIHAWPDGQIAQE</sequence>
<organism>
    <name type="scientific">Escherichia coli O157:H7</name>
    <dbReference type="NCBI Taxonomy" id="83334"/>
    <lineage>
        <taxon>Bacteria</taxon>
        <taxon>Pseudomonadati</taxon>
        <taxon>Pseudomonadota</taxon>
        <taxon>Gammaproteobacteria</taxon>
        <taxon>Enterobacterales</taxon>
        <taxon>Enterobacteriaceae</taxon>
        <taxon>Escherichia</taxon>
    </lineage>
</organism>
<proteinExistence type="inferred from homology"/>
<feature type="chain" id="PRO_0000148295" description="Putative permease PerM">
    <location>
        <begin position="1"/>
        <end position="353"/>
    </location>
</feature>
<feature type="transmembrane region" description="Helical" evidence="1">
    <location>
        <begin position="19"/>
        <end position="39"/>
    </location>
</feature>
<feature type="transmembrane region" description="Helical" evidence="1">
    <location>
        <begin position="72"/>
        <end position="92"/>
    </location>
</feature>
<feature type="transmembrane region" description="Helical" evidence="1">
    <location>
        <begin position="156"/>
        <end position="176"/>
    </location>
</feature>
<feature type="transmembrane region" description="Helical" evidence="1">
    <location>
        <begin position="217"/>
        <end position="237"/>
    </location>
</feature>
<feature type="transmembrane region" description="Helical" evidence="1">
    <location>
        <begin position="240"/>
        <end position="260"/>
    </location>
</feature>
<feature type="transmembrane region" description="Helical" evidence="1">
    <location>
        <begin position="281"/>
        <end position="301"/>
    </location>
</feature>
<feature type="transmembrane region" description="Helical" evidence="1">
    <location>
        <begin position="310"/>
        <end position="330"/>
    </location>
</feature>
<dbReference type="EMBL" id="AE005174">
    <property type="protein sequence ID" value="AAG57603.1"/>
    <property type="molecule type" value="Genomic_DNA"/>
</dbReference>
<dbReference type="EMBL" id="BA000007">
    <property type="protein sequence ID" value="BAB36778.1"/>
    <property type="molecule type" value="Genomic_DNA"/>
</dbReference>
<dbReference type="PIR" id="C91048">
    <property type="entry name" value="C91048"/>
</dbReference>
<dbReference type="RefSeq" id="WP_000892044.1">
    <property type="nucleotide sequence ID" value="NZ_VOAI01000001.1"/>
</dbReference>
<dbReference type="SMR" id="P0AFJ0"/>
<dbReference type="STRING" id="155864.Z3755"/>
<dbReference type="KEGG" id="ece:Z3755"/>
<dbReference type="KEGG" id="ecs:ECs_3355"/>
<dbReference type="PATRIC" id="fig|386585.9.peg.3504"/>
<dbReference type="eggNOG" id="COG0628">
    <property type="taxonomic scope" value="Bacteria"/>
</dbReference>
<dbReference type="HOGENOM" id="CLU_031275_8_0_6"/>
<dbReference type="OMA" id="WVLMRVI"/>
<dbReference type="Proteomes" id="UP000000558">
    <property type="component" value="Chromosome"/>
</dbReference>
<dbReference type="Proteomes" id="UP000002519">
    <property type="component" value="Chromosome"/>
</dbReference>
<dbReference type="GO" id="GO:0005886">
    <property type="term" value="C:plasma membrane"/>
    <property type="evidence" value="ECO:0007669"/>
    <property type="project" value="UniProtKB-SubCell"/>
</dbReference>
<dbReference type="GO" id="GO:0055085">
    <property type="term" value="P:transmembrane transport"/>
    <property type="evidence" value="ECO:0007669"/>
    <property type="project" value="TreeGrafter"/>
</dbReference>
<dbReference type="InterPro" id="IPR002549">
    <property type="entry name" value="AI-2E-like"/>
</dbReference>
<dbReference type="PANTHER" id="PTHR21716:SF53">
    <property type="entry name" value="PERMEASE PERM-RELATED"/>
    <property type="match status" value="1"/>
</dbReference>
<dbReference type="PANTHER" id="PTHR21716">
    <property type="entry name" value="TRANSMEMBRANE PROTEIN"/>
    <property type="match status" value="1"/>
</dbReference>
<dbReference type="Pfam" id="PF01594">
    <property type="entry name" value="AI-2E_transport"/>
    <property type="match status" value="1"/>
</dbReference>
<protein>
    <recommendedName>
        <fullName>Putative permease PerM</fullName>
    </recommendedName>
</protein>
<keyword id="KW-1003">Cell membrane</keyword>
<keyword id="KW-0472">Membrane</keyword>
<keyword id="KW-1185">Reference proteome</keyword>
<keyword id="KW-0812">Transmembrane</keyword>
<keyword id="KW-1133">Transmembrane helix</keyword>
<keyword id="KW-0813">Transport</keyword>
<gene>
    <name type="primary">perM</name>
    <name type="ordered locus">Z3755</name>
    <name type="ordered locus">ECs3355</name>
</gene>
<accession>P0AFJ0</accession>
<accession>P71230</accession>
<accession>P77406</accession>
<evidence type="ECO:0000255" key="1"/>
<evidence type="ECO:0000305" key="2"/>
<reference key="1">
    <citation type="journal article" date="2001" name="Nature">
        <title>Genome sequence of enterohaemorrhagic Escherichia coli O157:H7.</title>
        <authorList>
            <person name="Perna N.T."/>
            <person name="Plunkett G. III"/>
            <person name="Burland V."/>
            <person name="Mau B."/>
            <person name="Glasner J.D."/>
            <person name="Rose D.J."/>
            <person name="Mayhew G.F."/>
            <person name="Evans P.S."/>
            <person name="Gregor J."/>
            <person name="Kirkpatrick H.A."/>
            <person name="Posfai G."/>
            <person name="Hackett J."/>
            <person name="Klink S."/>
            <person name="Boutin A."/>
            <person name="Shao Y."/>
            <person name="Miller L."/>
            <person name="Grotbeck E.J."/>
            <person name="Davis N.W."/>
            <person name="Lim A."/>
            <person name="Dimalanta E.T."/>
            <person name="Potamousis K."/>
            <person name="Apodaca J."/>
            <person name="Anantharaman T.S."/>
            <person name="Lin J."/>
            <person name="Yen G."/>
            <person name="Schwartz D.C."/>
            <person name="Welch R.A."/>
            <person name="Blattner F.R."/>
        </authorList>
    </citation>
    <scope>NUCLEOTIDE SEQUENCE [LARGE SCALE GENOMIC DNA]</scope>
    <source>
        <strain>O157:H7 / EDL933 / ATCC 700927 / EHEC</strain>
    </source>
</reference>
<reference key="2">
    <citation type="journal article" date="2001" name="DNA Res.">
        <title>Complete genome sequence of enterohemorrhagic Escherichia coli O157:H7 and genomic comparison with a laboratory strain K-12.</title>
        <authorList>
            <person name="Hayashi T."/>
            <person name="Makino K."/>
            <person name="Ohnishi M."/>
            <person name="Kurokawa K."/>
            <person name="Ishii K."/>
            <person name="Yokoyama K."/>
            <person name="Han C.-G."/>
            <person name="Ohtsubo E."/>
            <person name="Nakayama K."/>
            <person name="Murata T."/>
            <person name="Tanaka M."/>
            <person name="Tobe T."/>
            <person name="Iida T."/>
            <person name="Takami H."/>
            <person name="Honda T."/>
            <person name="Sasakawa C."/>
            <person name="Ogasawara N."/>
            <person name="Yasunaga T."/>
            <person name="Kuhara S."/>
            <person name="Shiba T."/>
            <person name="Hattori M."/>
            <person name="Shinagawa H."/>
        </authorList>
    </citation>
    <scope>NUCLEOTIDE SEQUENCE [LARGE SCALE GENOMIC DNA]</scope>
    <source>
        <strain>O157:H7 / Sakai / RIMD 0509952 / EHEC</strain>
    </source>
</reference>